<keyword id="KW-0002">3D-structure</keyword>
<keyword id="KW-0472">Membrane</keyword>
<keyword id="KW-0597">Phosphoprotein</keyword>
<keyword id="KW-0653">Protein transport</keyword>
<keyword id="KW-1185">Reference proteome</keyword>
<keyword id="KW-0804">Transcription</keyword>
<keyword id="KW-0805">Transcription regulation</keyword>
<keyword id="KW-0813">Transport</keyword>
<keyword id="KW-0926">Vacuole</keyword>
<reference key="1">
    <citation type="journal article" date="1995" name="FEBS Lett.">
        <title>A second nitrogen permease regulator in Saccharomyces cerevisiae.</title>
        <authorList>
            <person name="Rousselet G."/>
            <person name="Simon M."/>
            <person name="Ripoche P."/>
            <person name="Buhler J.-M."/>
        </authorList>
    </citation>
    <scope>NUCLEOTIDE SEQUENCE [GENOMIC DNA]</scope>
    <source>
        <strain>ATCC 204508 / S288c</strain>
    </source>
</reference>
<reference key="2">
    <citation type="journal article" date="1997" name="Nature">
        <title>The nucleotide sequence of Saccharomyces cerevisiae chromosome V.</title>
        <authorList>
            <person name="Dietrich F.S."/>
            <person name="Mulligan J.T."/>
            <person name="Hennessy K.M."/>
            <person name="Yelton M.A."/>
            <person name="Allen E."/>
            <person name="Araujo R."/>
            <person name="Aviles E."/>
            <person name="Berno A."/>
            <person name="Brennan T."/>
            <person name="Carpenter J."/>
            <person name="Chen E."/>
            <person name="Cherry J.M."/>
            <person name="Chung E."/>
            <person name="Duncan M."/>
            <person name="Guzman E."/>
            <person name="Hartzell G."/>
            <person name="Hunicke-Smith S."/>
            <person name="Hyman R.W."/>
            <person name="Kayser A."/>
            <person name="Komp C."/>
            <person name="Lashkari D."/>
            <person name="Lew H."/>
            <person name="Lin D."/>
            <person name="Mosedale D."/>
            <person name="Nakahara K."/>
            <person name="Namath A."/>
            <person name="Norgren R."/>
            <person name="Oefner P."/>
            <person name="Oh C."/>
            <person name="Petel F.X."/>
            <person name="Roberts D."/>
            <person name="Sehl P."/>
            <person name="Schramm S."/>
            <person name="Shogren T."/>
            <person name="Smith V."/>
            <person name="Taylor P."/>
            <person name="Wei Y."/>
            <person name="Botstein D."/>
            <person name="Davis R.W."/>
        </authorList>
    </citation>
    <scope>NUCLEOTIDE SEQUENCE [LARGE SCALE GENOMIC DNA]</scope>
    <source>
        <strain>ATCC 204508 / S288c</strain>
    </source>
</reference>
<reference key="3">
    <citation type="journal article" date="2014" name="G3 (Bethesda)">
        <title>The reference genome sequence of Saccharomyces cerevisiae: Then and now.</title>
        <authorList>
            <person name="Engel S.R."/>
            <person name="Dietrich F.S."/>
            <person name="Fisk D.G."/>
            <person name="Binkley G."/>
            <person name="Balakrishnan R."/>
            <person name="Costanzo M.C."/>
            <person name="Dwight S.S."/>
            <person name="Hitz B.C."/>
            <person name="Karra K."/>
            <person name="Nash R.S."/>
            <person name="Weng S."/>
            <person name="Wong E.D."/>
            <person name="Lloyd P."/>
            <person name="Skrzypek M.S."/>
            <person name="Miyasato S.R."/>
            <person name="Simison M."/>
            <person name="Cherry J.M."/>
        </authorList>
    </citation>
    <scope>GENOME REANNOTATION</scope>
    <source>
        <strain>ATCC 204508 / S288c</strain>
    </source>
</reference>
<reference key="4">
    <citation type="journal article" date="2007" name="Genome Res.">
        <title>Approaching a complete repository of sequence-verified protein-encoding clones for Saccharomyces cerevisiae.</title>
        <authorList>
            <person name="Hu Y."/>
            <person name="Rolfs A."/>
            <person name="Bhullar B."/>
            <person name="Murthy T.V.S."/>
            <person name="Zhu C."/>
            <person name="Berger M.F."/>
            <person name="Camargo A.A."/>
            <person name="Kelley F."/>
            <person name="McCarron S."/>
            <person name="Jepson D."/>
            <person name="Richardson A."/>
            <person name="Raphael J."/>
            <person name="Moreira D."/>
            <person name="Taycher E."/>
            <person name="Zuo D."/>
            <person name="Mohr S."/>
            <person name="Kane M.F."/>
            <person name="Williamson J."/>
            <person name="Simpson A.J.G."/>
            <person name="Bulyk M.L."/>
            <person name="Harlow E."/>
            <person name="Marsischky G."/>
            <person name="Kolodner R.D."/>
            <person name="LaBaer J."/>
        </authorList>
    </citation>
    <scope>NUCLEOTIDE SEQUENCE [GENOMIC DNA]</scope>
</reference>
<reference key="5">
    <citation type="journal article" date="2003" name="Mol. Pharmacol.">
        <title>Anticancer drug resistance induced by disruption of the Saccharomyces cerevisiae NPR2 gene: a novel component involved in cisplatin- and doxorubicin-provoked cell kill.</title>
        <authorList>
            <person name="Schenk P.W."/>
            <person name="Brok M."/>
            <person name="Boersma A.W."/>
            <person name="Brandsma J.A."/>
            <person name="Den Dulk H."/>
            <person name="Burger H."/>
            <person name="Stoter G."/>
            <person name="Brouwer J."/>
            <person name="Nooter K."/>
        </authorList>
    </citation>
    <scope>INVOLVEMENT IN CISPLATIN RESISTANCE</scope>
</reference>
<reference key="6">
    <citation type="journal article" date="2003" name="Nature">
        <title>Sequencing and comparison of yeast species to identify genes and regulatory elements.</title>
        <authorList>
            <person name="Kellis M."/>
            <person name="Patterson N."/>
            <person name="Endrizzi M."/>
            <person name="Birren B.W."/>
            <person name="Lander E.S."/>
        </authorList>
    </citation>
    <scope>IDENTIFICATION OF PROBABLE INITIATION SITE</scope>
</reference>
<reference key="7">
    <citation type="journal article" date="2003" name="Nature">
        <title>Global analysis of protein expression in yeast.</title>
        <authorList>
            <person name="Ghaemmaghami S."/>
            <person name="Huh W.-K."/>
            <person name="Bower K."/>
            <person name="Howson R.W."/>
            <person name="Belle A."/>
            <person name="Dephoure N."/>
            <person name="O'Shea E.K."/>
            <person name="Weissman J.S."/>
        </authorList>
    </citation>
    <scope>LEVEL OF PROTEIN EXPRESSION [LARGE SCALE ANALYSIS]</scope>
</reference>
<reference key="8">
    <citation type="journal article" date="2008" name="Mol. Cell. Proteomics">
        <title>A multidimensional chromatography technology for in-depth phosphoproteome analysis.</title>
        <authorList>
            <person name="Albuquerque C.P."/>
            <person name="Smolka M.B."/>
            <person name="Payne S.H."/>
            <person name="Bafna V."/>
            <person name="Eng J."/>
            <person name="Zhou H."/>
        </authorList>
    </citation>
    <scope>PHOSPHORYLATION [LARGE SCALE ANALYSIS] AT SER-362</scope>
    <scope>IDENTIFICATION BY MASS SPECTROMETRY [LARGE SCALE ANALYSIS]</scope>
</reference>
<reference key="9">
    <citation type="journal article" date="2009" name="PLoS Genet.">
        <title>A genome-wide screen for regulators of TORC1 in response to amino acid starvation reveals a conserved Npr2/3 complex.</title>
        <authorList>
            <person name="Neklesa T.K."/>
            <person name="Davis R.W."/>
        </authorList>
    </citation>
    <scope>FUNCTION</scope>
    <scope>INTERACTION WITH NPR3</scope>
</reference>
<reference key="10">
    <citation type="journal article" date="2009" name="Science">
        <title>Global analysis of Cdk1 substrate phosphorylation sites provides insights into evolution.</title>
        <authorList>
            <person name="Holt L.J."/>
            <person name="Tuch B.B."/>
            <person name="Villen J."/>
            <person name="Johnson A.D."/>
            <person name="Gygi S.P."/>
            <person name="Morgan D.O."/>
        </authorList>
    </citation>
    <scope>PHOSPHORYLATION [LARGE SCALE ANALYSIS] AT SER-362</scope>
    <scope>IDENTIFICATION BY MASS SPECTROMETRY [LARGE SCALE ANALYSIS]</scope>
</reference>
<reference key="11">
    <citation type="journal article" date="2011" name="Mol. Cell. Proteomics">
        <title>A conserved coatomer-related complex containing Sec13 and Seh1 dynamically associates with the vacuole in Saccharomyces cerevisiae.</title>
        <authorList>
            <person name="Dokudovskaya S."/>
            <person name="Waharte F."/>
            <person name="Schlessinger A."/>
            <person name="Pieper U."/>
            <person name="Devos D.P."/>
            <person name="Cristea I.M."/>
            <person name="Williams R."/>
            <person name="Salamero J."/>
            <person name="Chait B.T."/>
            <person name="Sali A."/>
            <person name="Field M.C."/>
            <person name="Rout M.P."/>
            <person name="Dargemont C."/>
        </authorList>
    </citation>
    <scope>SUBCELLULAR LOCATION</scope>
    <scope>IDENTIFICATION IN THE SEA COMPLEX</scope>
    <scope>FUNCTION</scope>
</reference>
<reference key="12">
    <citation type="journal article" date="2015" name="Mol. Biol. Cell">
        <title>A LAPF/phafin1-like protein regulates TORC1 and lysosomal membrane permeabilization in response to endoplasmic reticulum membrane stress.</title>
        <authorList>
            <person name="Kim A."/>
            <person name="Cunningham K.W."/>
        </authorList>
    </citation>
    <scope>FUNCTION</scope>
    <scope>DISRUPTION PHENOTYPE</scope>
</reference>
<evidence type="ECO:0000256" key="1">
    <source>
        <dbReference type="SAM" id="MobiDB-lite"/>
    </source>
</evidence>
<evidence type="ECO:0000269" key="2">
    <source>
    </source>
</evidence>
<evidence type="ECO:0000269" key="3">
    <source>
    </source>
</evidence>
<evidence type="ECO:0000269" key="4">
    <source>
    </source>
</evidence>
<evidence type="ECO:0000269" key="5">
    <source>
    </source>
</evidence>
<evidence type="ECO:0000305" key="6"/>
<evidence type="ECO:0007744" key="7">
    <source>
    </source>
</evidence>
<evidence type="ECO:0007744" key="8">
    <source>
    </source>
</evidence>
<evidence type="ECO:0007829" key="9">
    <source>
        <dbReference type="PDB" id="8AE6"/>
    </source>
</evidence>
<gene>
    <name type="primary">NPR2</name>
    <name type="ordered locus">YEL062W</name>
</gene>
<dbReference type="EMBL" id="X79105">
    <property type="protein sequence ID" value="CAA55721.1"/>
    <property type="status" value="ALT_INIT"/>
    <property type="molecule type" value="Genomic_DNA"/>
</dbReference>
<dbReference type="EMBL" id="U18795">
    <property type="protein sequence ID" value="AAB65025.1"/>
    <property type="status" value="ALT_INIT"/>
    <property type="molecule type" value="Genomic_DNA"/>
</dbReference>
<dbReference type="EMBL" id="AY692866">
    <property type="protein sequence ID" value="AAT92885.1"/>
    <property type="status" value="ALT_INIT"/>
    <property type="molecule type" value="Genomic_DNA"/>
</dbReference>
<dbReference type="EMBL" id="BK006939">
    <property type="protein sequence ID" value="DAA07592.1"/>
    <property type="molecule type" value="Genomic_DNA"/>
</dbReference>
<dbReference type="PIR" id="S44938">
    <property type="entry name" value="S44938"/>
</dbReference>
<dbReference type="RefSeq" id="NP_010852.4">
    <property type="nucleotide sequence ID" value="NM_001178877.3"/>
</dbReference>
<dbReference type="PDB" id="8ADL">
    <property type="method" value="EM"/>
    <property type="resolution" value="2.95 A"/>
    <property type="chains" value="S/T=1-615"/>
</dbReference>
<dbReference type="PDB" id="8AE6">
    <property type="method" value="EM"/>
    <property type="resolution" value="2.70 A"/>
    <property type="chains" value="S=1-615"/>
</dbReference>
<dbReference type="PDBsum" id="8ADL"/>
<dbReference type="PDBsum" id="8AE6"/>
<dbReference type="EMDB" id="EMD-15364"/>
<dbReference type="EMDB" id="EMD-15381"/>
<dbReference type="SMR" id="P39923"/>
<dbReference type="BioGRID" id="36667">
    <property type="interactions" value="165"/>
</dbReference>
<dbReference type="ComplexPortal" id="CPX-3231">
    <property type="entry name" value="SEA complex"/>
</dbReference>
<dbReference type="DIP" id="DIP-1985N"/>
<dbReference type="FunCoup" id="P39923">
    <property type="interactions" value="263"/>
</dbReference>
<dbReference type="IntAct" id="P39923">
    <property type="interactions" value="32"/>
</dbReference>
<dbReference type="MINT" id="P39923"/>
<dbReference type="STRING" id="4932.YEL062W"/>
<dbReference type="GlyGen" id="P39923">
    <property type="glycosylation" value="1 site, 1 O-linked glycan (1 site)"/>
</dbReference>
<dbReference type="iPTMnet" id="P39923"/>
<dbReference type="PaxDb" id="4932-YEL062W"/>
<dbReference type="PeptideAtlas" id="P39923"/>
<dbReference type="TopDownProteomics" id="P39923"/>
<dbReference type="EnsemblFungi" id="YEL062W_mRNA">
    <property type="protein sequence ID" value="YEL062W"/>
    <property type="gene ID" value="YEL062W"/>
</dbReference>
<dbReference type="GeneID" id="856647"/>
<dbReference type="KEGG" id="sce:YEL062W"/>
<dbReference type="AGR" id="SGD:S000000788"/>
<dbReference type="SGD" id="S000000788">
    <property type="gene designation" value="NPR2"/>
</dbReference>
<dbReference type="VEuPathDB" id="FungiDB:YEL062W"/>
<dbReference type="eggNOG" id="KOG3789">
    <property type="taxonomic scope" value="Eukaryota"/>
</dbReference>
<dbReference type="GeneTree" id="ENSGT00390000001414"/>
<dbReference type="HOGENOM" id="CLU_014995_3_0_1"/>
<dbReference type="InParanoid" id="P39923"/>
<dbReference type="OMA" id="IDVNWDP"/>
<dbReference type="OrthoDB" id="338854at2759"/>
<dbReference type="BioCyc" id="YEAST:G3O-30177-MONOMER"/>
<dbReference type="BioGRID-ORCS" id="856647">
    <property type="hits" value="4 hits in 10 CRISPR screens"/>
</dbReference>
<dbReference type="PRO" id="PR:P39923"/>
<dbReference type="Proteomes" id="UP000002311">
    <property type="component" value="Chromosome V"/>
</dbReference>
<dbReference type="RNAct" id="P39923">
    <property type="molecule type" value="protein"/>
</dbReference>
<dbReference type="GO" id="GO:1990130">
    <property type="term" value="C:GATOR1 complex"/>
    <property type="evidence" value="ECO:0000314"/>
    <property type="project" value="SGD"/>
</dbReference>
<dbReference type="GO" id="GO:0035859">
    <property type="term" value="C:Seh1-associated complex"/>
    <property type="evidence" value="ECO:0000314"/>
    <property type="project" value="SGD"/>
</dbReference>
<dbReference type="GO" id="GO:0005774">
    <property type="term" value="C:vacuolar membrane"/>
    <property type="evidence" value="ECO:0000318"/>
    <property type="project" value="GO_Central"/>
</dbReference>
<dbReference type="GO" id="GO:0034198">
    <property type="term" value="P:cellular response to amino acid starvation"/>
    <property type="evidence" value="ECO:0000315"/>
    <property type="project" value="SGD"/>
</dbReference>
<dbReference type="GO" id="GO:0006995">
    <property type="term" value="P:cellular response to nitrogen starvation"/>
    <property type="evidence" value="ECO:0000315"/>
    <property type="project" value="SGD"/>
</dbReference>
<dbReference type="GO" id="GO:1904262">
    <property type="term" value="P:negative regulation of TORC1 signaling"/>
    <property type="evidence" value="ECO:0000315"/>
    <property type="project" value="SGD"/>
</dbReference>
<dbReference type="GO" id="GO:0010508">
    <property type="term" value="P:positive regulation of autophagy"/>
    <property type="evidence" value="ECO:0000315"/>
    <property type="project" value="SGD"/>
</dbReference>
<dbReference type="GO" id="GO:0015824">
    <property type="term" value="P:proline transport"/>
    <property type="evidence" value="ECO:0000315"/>
    <property type="project" value="SGD"/>
</dbReference>
<dbReference type="GO" id="GO:0015031">
    <property type="term" value="P:protein transport"/>
    <property type="evidence" value="ECO:0007669"/>
    <property type="project" value="UniProtKB-KW"/>
</dbReference>
<dbReference type="GO" id="GO:2000785">
    <property type="term" value="P:regulation of autophagosome assembly"/>
    <property type="evidence" value="ECO:0000315"/>
    <property type="project" value="SGD"/>
</dbReference>
<dbReference type="GO" id="GO:1903432">
    <property type="term" value="P:regulation of TORC1 signaling"/>
    <property type="evidence" value="ECO:0000314"/>
    <property type="project" value="ComplexPortal"/>
</dbReference>
<dbReference type="GO" id="GO:0009410">
    <property type="term" value="P:response to xenobiotic stimulus"/>
    <property type="evidence" value="ECO:0000315"/>
    <property type="project" value="SGD"/>
</dbReference>
<dbReference type="GO" id="GO:0015840">
    <property type="term" value="P:urea transport"/>
    <property type="evidence" value="ECO:0000315"/>
    <property type="project" value="SGD"/>
</dbReference>
<dbReference type="InterPro" id="IPR009348">
    <property type="entry name" value="NPR2-like"/>
</dbReference>
<dbReference type="PANTHER" id="PTHR12991:SF10">
    <property type="entry name" value="GATOR COMPLEX PROTEIN NPRL2"/>
    <property type="match status" value="1"/>
</dbReference>
<dbReference type="PANTHER" id="PTHR12991">
    <property type="entry name" value="NITROGEN PERMEASE REGULATOR 2/TUMOR SUPPRESSOR CANDIDATE 4"/>
    <property type="match status" value="1"/>
</dbReference>
<dbReference type="Pfam" id="PF06218">
    <property type="entry name" value="NPR2"/>
    <property type="match status" value="1"/>
</dbReference>
<comment type="function">
    <text evidence="3 4 5">Component of the SEA complex which coats the vacuolar membrane and is involved in intracellular trafficking, autophagy, response to nitrogen starvation, and amino acid biogenesis (PubMed:21454883). Mediates inactivation of the TORC1 complex in response to amino acid starvation (PubMed:19521502, PubMed:26510498). Post-transcriptional regulator of nitrogen permeases (PubMed:19521502). May be involved in putative NPR1-dependent phosphorylation of nitrogen permeases or in the processing and targeting of nitrogen permeases at the level of the endoplasmic reticulum (PubMed:19521502).</text>
</comment>
<comment type="subunit">
    <text evidence="4">Component of the SEA complex composed of at least IML1/SEA1, RTC1/SEA2, MTC5/SEA3, NPR2, NPR3, SEA4, SEC13 and SEH1. Forms a heterodimer with NPR3.</text>
</comment>
<comment type="interaction">
    <interactant intactId="EBI-12212">
        <id>P39923</id>
    </interactant>
    <interactant intactId="EBI-24336">
        <id>P38742</id>
        <label>NPR3</label>
    </interactant>
    <organismsDiffer>false</organismsDiffer>
    <experiments>5</experiments>
</comment>
<comment type="subcellular location">
    <subcellularLocation>
        <location evidence="4">Vacuole membrane</location>
        <topology evidence="4">Peripheral membrane protein</topology>
    </subcellularLocation>
</comment>
<comment type="induction">
    <text>By urea and proline.</text>
</comment>
<comment type="disruption phenotype">
    <text evidence="5">TORC1 abnormally activated in presence of rapamycin.</text>
</comment>
<comment type="miscellaneous">
    <text evidence="2">Present with 319 molecules/cell in log phase SD medium.</text>
</comment>
<comment type="similarity">
    <text evidence="6">Belongs to the NPR2 family.</text>
</comment>
<comment type="sequence caution" evidence="6">
    <conflict type="erroneous initiation">
        <sequence resource="EMBL-CDS" id="AAB65025"/>
    </conflict>
    <text>Extended N-terminus.</text>
</comment>
<comment type="sequence caution" evidence="6">
    <conflict type="erroneous initiation">
        <sequence resource="EMBL-CDS" id="AAT92885"/>
    </conflict>
    <text>Extended N-terminus.</text>
</comment>
<comment type="sequence caution" evidence="6">
    <conflict type="erroneous initiation">
        <sequence resource="EMBL-CDS" id="CAA55721"/>
    </conflict>
    <text>Extended N-terminus.</text>
</comment>
<name>NPR2_YEAST</name>
<feature type="chain" id="PRO_0000213321" description="Nitrogen permease regulator 2">
    <location>
        <begin position="1"/>
        <end position="615"/>
    </location>
</feature>
<feature type="region of interest" description="Disordered" evidence="1">
    <location>
        <begin position="143"/>
        <end position="176"/>
    </location>
</feature>
<feature type="region of interest" description="Disordered" evidence="1">
    <location>
        <begin position="354"/>
        <end position="398"/>
    </location>
</feature>
<feature type="region of interest" description="Disordered" evidence="1">
    <location>
        <begin position="527"/>
        <end position="551"/>
    </location>
</feature>
<feature type="compositionally biased region" description="Low complexity" evidence="1">
    <location>
        <begin position="143"/>
        <end position="167"/>
    </location>
</feature>
<feature type="compositionally biased region" description="Low complexity" evidence="1">
    <location>
        <begin position="373"/>
        <end position="398"/>
    </location>
</feature>
<feature type="compositionally biased region" description="Polar residues" evidence="1">
    <location>
        <begin position="527"/>
        <end position="539"/>
    </location>
</feature>
<feature type="modified residue" description="Phosphoserine" evidence="7 8">
    <location>
        <position position="362"/>
    </location>
</feature>
<feature type="sequence conflict" description="In Ref. 4; AAT92885." evidence="6" ref="4">
    <original>D</original>
    <variation>G</variation>
    <location>
        <position position="225"/>
    </location>
</feature>
<feature type="strand" evidence="9">
    <location>
        <begin position="12"/>
        <end position="20"/>
    </location>
</feature>
<feature type="turn" evidence="9">
    <location>
        <begin position="21"/>
        <end position="23"/>
    </location>
</feature>
<feature type="strand" evidence="9">
    <location>
        <begin position="24"/>
        <end position="32"/>
    </location>
</feature>
<feature type="helix" evidence="9">
    <location>
        <begin position="35"/>
        <end position="38"/>
    </location>
</feature>
<feature type="turn" evidence="9">
    <location>
        <begin position="43"/>
        <end position="45"/>
    </location>
</feature>
<feature type="helix" evidence="9">
    <location>
        <begin position="47"/>
        <end position="50"/>
    </location>
</feature>
<feature type="turn" evidence="9">
    <location>
        <begin position="54"/>
        <end position="56"/>
    </location>
</feature>
<feature type="strand" evidence="9">
    <location>
        <begin position="57"/>
        <end position="59"/>
    </location>
</feature>
<feature type="strand" evidence="9">
    <location>
        <begin position="61"/>
        <end position="65"/>
    </location>
</feature>
<feature type="strand" evidence="9">
    <location>
        <begin position="68"/>
        <end position="78"/>
    </location>
</feature>
<feature type="helix" evidence="9">
    <location>
        <begin position="83"/>
        <end position="85"/>
    </location>
</feature>
<feature type="strand" evidence="9">
    <location>
        <begin position="86"/>
        <end position="99"/>
    </location>
</feature>
<feature type="turn" evidence="9">
    <location>
        <begin position="102"/>
        <end position="104"/>
    </location>
</feature>
<feature type="helix" evidence="9">
    <location>
        <begin position="105"/>
        <end position="122"/>
    </location>
</feature>
<feature type="helix" evidence="9">
    <location>
        <begin position="124"/>
        <end position="127"/>
    </location>
</feature>
<feature type="helix" evidence="9">
    <location>
        <begin position="197"/>
        <end position="210"/>
    </location>
</feature>
<feature type="strand" evidence="9">
    <location>
        <begin position="211"/>
        <end position="217"/>
    </location>
</feature>
<feature type="strand" evidence="9">
    <location>
        <begin position="219"/>
        <end position="221"/>
    </location>
</feature>
<feature type="strand" evidence="9">
    <location>
        <begin position="223"/>
        <end position="227"/>
    </location>
</feature>
<feature type="strand" evidence="9">
    <location>
        <begin position="244"/>
        <end position="249"/>
    </location>
</feature>
<feature type="turn" evidence="9">
    <location>
        <begin position="251"/>
        <end position="254"/>
    </location>
</feature>
<feature type="helix" evidence="9">
    <location>
        <begin position="261"/>
        <end position="266"/>
    </location>
</feature>
<feature type="helix" evidence="9">
    <location>
        <begin position="267"/>
        <end position="269"/>
    </location>
</feature>
<feature type="strand" evidence="9">
    <location>
        <begin position="271"/>
        <end position="273"/>
    </location>
</feature>
<feature type="helix" evidence="9">
    <location>
        <begin position="276"/>
        <end position="282"/>
    </location>
</feature>
<feature type="helix" evidence="9">
    <location>
        <begin position="287"/>
        <end position="299"/>
    </location>
</feature>
<feature type="strand" evidence="9">
    <location>
        <begin position="303"/>
        <end position="306"/>
    </location>
</feature>
<feature type="strand" evidence="9">
    <location>
        <begin position="314"/>
        <end position="317"/>
    </location>
</feature>
<feature type="helix" evidence="9">
    <location>
        <begin position="321"/>
        <end position="324"/>
    </location>
</feature>
<feature type="helix" evidence="9">
    <location>
        <begin position="330"/>
        <end position="338"/>
    </location>
</feature>
<feature type="helix" evidence="9">
    <location>
        <begin position="346"/>
        <end position="348"/>
    </location>
</feature>
<feature type="helix" evidence="9">
    <location>
        <begin position="435"/>
        <end position="443"/>
    </location>
</feature>
<feature type="helix" evidence="9">
    <location>
        <begin position="451"/>
        <end position="457"/>
    </location>
</feature>
<feature type="helix" evidence="9">
    <location>
        <begin position="460"/>
        <end position="464"/>
    </location>
</feature>
<feature type="helix" evidence="9">
    <location>
        <begin position="469"/>
        <end position="478"/>
    </location>
</feature>
<feature type="strand" evidence="9">
    <location>
        <begin position="481"/>
        <end position="491"/>
    </location>
</feature>
<feature type="helix" evidence="9">
    <location>
        <begin position="570"/>
        <end position="581"/>
    </location>
</feature>
<feature type="helix" evidence="9">
    <location>
        <begin position="586"/>
        <end position="593"/>
    </location>
</feature>
<feature type="helix" evidence="9">
    <location>
        <begin position="597"/>
        <end position="607"/>
    </location>
</feature>
<feature type="strand" evidence="9">
    <location>
        <begin position="610"/>
        <end position="615"/>
    </location>
</feature>
<sequence>MLSYFQGFVPIHTIFYSVFHPTEGSKIKYEFPPNNLKNHGINFNTFKNYIIPKPILCHKLITFKYGTYRIVCYPVTINSPIYARNFFSFNFVFVFPYDCETSPYEPAITRLGKMFKVLEEQNQLLSKSERDPVFFDLKVLENSTTTPSTAGPSSTPNPSSNTTPTHPTSEKDTKDMRSSRYSDLIKDLGLPQSAFSIQDLLMRIFQDLNNYSECLIPIDEGNAVDIKIFPLLRPPTTCVSLEDVPLSSVNLKKIIDVNWDPTMMSIVPYIDGLNSIAKISKLSNSDPGLVIECIRHLIYYKCVTLSDIFQFSNIYAPSSLIRNFLTDPLMASDCQSYVTFPEVSKISNLPLNKSLGSGDQDSPSFSVRRKSKSSSIPSNPDSRTTSFSSTSRVSQNSSLNSSFSSIYKDWRQSQTSCSSSNIHVINNRNRFLPTRSCLFDLYRSLSQGQTLKTWYESKYMILKENNIDIRRFITFGLEKRIIYRCYSFPVMINAGSREPKEMTPIITKDLVNNDKLLEKRNHNHLLSATGSRNTAQSGNLKPERPSKVSFEMQRVSSLATGKSTMPKLSDEEEGILEESIRNAETFDKICVLLSKPKLEVESYLNELGEFKVINS</sequence>
<protein>
    <recommendedName>
        <fullName>Nitrogen permease regulator 2</fullName>
    </recommendedName>
</protein>
<accession>P39923</accession>
<accession>D3DLI8</accession>
<accession>Q6B264</accession>
<organism>
    <name type="scientific">Saccharomyces cerevisiae (strain ATCC 204508 / S288c)</name>
    <name type="common">Baker's yeast</name>
    <dbReference type="NCBI Taxonomy" id="559292"/>
    <lineage>
        <taxon>Eukaryota</taxon>
        <taxon>Fungi</taxon>
        <taxon>Dikarya</taxon>
        <taxon>Ascomycota</taxon>
        <taxon>Saccharomycotina</taxon>
        <taxon>Saccharomycetes</taxon>
        <taxon>Saccharomycetales</taxon>
        <taxon>Saccharomycetaceae</taxon>
        <taxon>Saccharomyces</taxon>
    </lineage>
</organism>
<proteinExistence type="evidence at protein level"/>